<comment type="function">
    <text evidence="2">Cell wall formation.</text>
</comment>
<comment type="catalytic activity">
    <reaction evidence="2">
        <text>2 D-alanine + ATP = D-alanyl-D-alanine + ADP + phosphate + H(+)</text>
        <dbReference type="Rhea" id="RHEA:11224"/>
        <dbReference type="ChEBI" id="CHEBI:15378"/>
        <dbReference type="ChEBI" id="CHEBI:30616"/>
        <dbReference type="ChEBI" id="CHEBI:43474"/>
        <dbReference type="ChEBI" id="CHEBI:57416"/>
        <dbReference type="ChEBI" id="CHEBI:57822"/>
        <dbReference type="ChEBI" id="CHEBI:456216"/>
        <dbReference type="EC" id="6.3.2.4"/>
    </reaction>
</comment>
<comment type="cofactor">
    <cofactor evidence="1">
        <name>Mg(2+)</name>
        <dbReference type="ChEBI" id="CHEBI:18420"/>
    </cofactor>
    <cofactor evidence="1">
        <name>Mn(2+)</name>
        <dbReference type="ChEBI" id="CHEBI:29035"/>
    </cofactor>
    <text evidence="1">Binds 2 magnesium or manganese ions per subunit.</text>
</comment>
<comment type="pathway">
    <text evidence="2">Cell wall biogenesis; peptidoglycan biosynthesis.</text>
</comment>
<comment type="subcellular location">
    <subcellularLocation>
        <location evidence="2">Cytoplasm</location>
    </subcellularLocation>
</comment>
<comment type="similarity">
    <text evidence="2">Belongs to the D-alanine--D-alanine ligase family.</text>
</comment>
<protein>
    <recommendedName>
        <fullName evidence="2">D-alanine--D-alanine ligase</fullName>
        <ecNumber evidence="2">6.3.2.4</ecNumber>
    </recommendedName>
    <alternativeName>
        <fullName evidence="2">D-Ala-D-Ala ligase</fullName>
    </alternativeName>
    <alternativeName>
        <fullName evidence="2">D-alanylalanine synthetase</fullName>
    </alternativeName>
</protein>
<gene>
    <name evidence="2" type="primary">ddl</name>
    <name type="ordered locus">ABAYE0150</name>
</gene>
<keyword id="KW-0067">ATP-binding</keyword>
<keyword id="KW-0133">Cell shape</keyword>
<keyword id="KW-0961">Cell wall biogenesis/degradation</keyword>
<keyword id="KW-0963">Cytoplasm</keyword>
<keyword id="KW-0436">Ligase</keyword>
<keyword id="KW-0460">Magnesium</keyword>
<keyword id="KW-0464">Manganese</keyword>
<keyword id="KW-0479">Metal-binding</keyword>
<keyword id="KW-0547">Nucleotide-binding</keyword>
<keyword id="KW-0573">Peptidoglycan synthesis</keyword>
<reference key="1">
    <citation type="journal article" date="2008" name="PLoS ONE">
        <title>Comparative analysis of Acinetobacters: three genomes for three lifestyles.</title>
        <authorList>
            <person name="Vallenet D."/>
            <person name="Nordmann P."/>
            <person name="Barbe V."/>
            <person name="Poirel L."/>
            <person name="Mangenot S."/>
            <person name="Bataille E."/>
            <person name="Dossat C."/>
            <person name="Gas S."/>
            <person name="Kreimeyer A."/>
            <person name="Lenoble P."/>
            <person name="Oztas S."/>
            <person name="Poulain J."/>
            <person name="Segurens B."/>
            <person name="Robert C."/>
            <person name="Abergel C."/>
            <person name="Claverie J.-M."/>
            <person name="Raoult D."/>
            <person name="Medigue C."/>
            <person name="Weissenbach J."/>
            <person name="Cruveiller S."/>
        </authorList>
    </citation>
    <scope>NUCLEOTIDE SEQUENCE [LARGE SCALE GENOMIC DNA]</scope>
    <source>
        <strain>AYE</strain>
    </source>
</reference>
<organism>
    <name type="scientific">Acinetobacter baumannii (strain AYE)</name>
    <dbReference type="NCBI Taxonomy" id="509173"/>
    <lineage>
        <taxon>Bacteria</taxon>
        <taxon>Pseudomonadati</taxon>
        <taxon>Pseudomonadota</taxon>
        <taxon>Gammaproteobacteria</taxon>
        <taxon>Moraxellales</taxon>
        <taxon>Moraxellaceae</taxon>
        <taxon>Acinetobacter</taxon>
        <taxon>Acinetobacter calcoaceticus/baumannii complex</taxon>
    </lineage>
</organism>
<feature type="chain" id="PRO_1000091157" description="D-alanine--D-alanine ligase">
    <location>
        <begin position="1"/>
        <end position="308"/>
    </location>
</feature>
<feature type="domain" description="ATP-grasp" evidence="2">
    <location>
        <begin position="104"/>
        <end position="301"/>
    </location>
</feature>
<feature type="binding site" evidence="2">
    <location>
        <begin position="130"/>
        <end position="185"/>
    </location>
    <ligand>
        <name>ATP</name>
        <dbReference type="ChEBI" id="CHEBI:30616"/>
    </ligand>
</feature>
<feature type="binding site" evidence="2">
    <location>
        <position position="255"/>
    </location>
    <ligand>
        <name>Mg(2+)</name>
        <dbReference type="ChEBI" id="CHEBI:18420"/>
        <label>1</label>
    </ligand>
</feature>
<feature type="binding site" evidence="2">
    <location>
        <position position="268"/>
    </location>
    <ligand>
        <name>Mg(2+)</name>
        <dbReference type="ChEBI" id="CHEBI:18420"/>
        <label>1</label>
    </ligand>
</feature>
<feature type="binding site" evidence="2">
    <location>
        <position position="268"/>
    </location>
    <ligand>
        <name>Mg(2+)</name>
        <dbReference type="ChEBI" id="CHEBI:18420"/>
        <label>2</label>
    </ligand>
</feature>
<feature type="binding site" evidence="2">
    <location>
        <position position="270"/>
    </location>
    <ligand>
        <name>Mg(2+)</name>
        <dbReference type="ChEBI" id="CHEBI:18420"/>
        <label>2</label>
    </ligand>
</feature>
<evidence type="ECO:0000250" key="1"/>
<evidence type="ECO:0000255" key="2">
    <source>
        <dbReference type="HAMAP-Rule" id="MF_00047"/>
    </source>
</evidence>
<dbReference type="EC" id="6.3.2.4" evidence="2"/>
<dbReference type="EMBL" id="CU459141">
    <property type="protein sequence ID" value="CAM85136.1"/>
    <property type="molecule type" value="Genomic_DNA"/>
</dbReference>
<dbReference type="RefSeq" id="WP_000063665.1">
    <property type="nucleotide sequence ID" value="NZ_JBDGFB010000004.1"/>
</dbReference>
<dbReference type="SMR" id="B0V9F7"/>
<dbReference type="EnsemblBacteria" id="CAM85136">
    <property type="protein sequence ID" value="CAM85136"/>
    <property type="gene ID" value="ABAYE0150"/>
</dbReference>
<dbReference type="KEGG" id="aby:ABAYE0150"/>
<dbReference type="HOGENOM" id="CLU_039268_1_2_6"/>
<dbReference type="UniPathway" id="UPA00219"/>
<dbReference type="GO" id="GO:0005829">
    <property type="term" value="C:cytosol"/>
    <property type="evidence" value="ECO:0007669"/>
    <property type="project" value="TreeGrafter"/>
</dbReference>
<dbReference type="GO" id="GO:0005524">
    <property type="term" value="F:ATP binding"/>
    <property type="evidence" value="ECO:0007669"/>
    <property type="project" value="UniProtKB-KW"/>
</dbReference>
<dbReference type="GO" id="GO:0008716">
    <property type="term" value="F:D-alanine-D-alanine ligase activity"/>
    <property type="evidence" value="ECO:0007669"/>
    <property type="project" value="UniProtKB-UniRule"/>
</dbReference>
<dbReference type="GO" id="GO:0046872">
    <property type="term" value="F:metal ion binding"/>
    <property type="evidence" value="ECO:0007669"/>
    <property type="project" value="UniProtKB-KW"/>
</dbReference>
<dbReference type="GO" id="GO:0071555">
    <property type="term" value="P:cell wall organization"/>
    <property type="evidence" value="ECO:0007669"/>
    <property type="project" value="UniProtKB-KW"/>
</dbReference>
<dbReference type="GO" id="GO:0009252">
    <property type="term" value="P:peptidoglycan biosynthetic process"/>
    <property type="evidence" value="ECO:0007669"/>
    <property type="project" value="UniProtKB-UniRule"/>
</dbReference>
<dbReference type="GO" id="GO:0008360">
    <property type="term" value="P:regulation of cell shape"/>
    <property type="evidence" value="ECO:0007669"/>
    <property type="project" value="UniProtKB-KW"/>
</dbReference>
<dbReference type="FunFam" id="3.30.1490.20:FF:000007">
    <property type="entry name" value="D-alanine--D-alanine ligase"/>
    <property type="match status" value="1"/>
</dbReference>
<dbReference type="FunFam" id="3.30.470.20:FF:000008">
    <property type="entry name" value="D-alanine--D-alanine ligase"/>
    <property type="match status" value="1"/>
</dbReference>
<dbReference type="Gene3D" id="3.40.50.20">
    <property type="match status" value="1"/>
</dbReference>
<dbReference type="Gene3D" id="3.30.470.20">
    <property type="entry name" value="ATP-grasp fold, B domain"/>
    <property type="match status" value="1"/>
</dbReference>
<dbReference type="HAMAP" id="MF_00047">
    <property type="entry name" value="Dala_Dala_lig"/>
    <property type="match status" value="1"/>
</dbReference>
<dbReference type="InterPro" id="IPR011761">
    <property type="entry name" value="ATP-grasp"/>
</dbReference>
<dbReference type="InterPro" id="IPR000291">
    <property type="entry name" value="D-Ala_lig_Van_CS"/>
</dbReference>
<dbReference type="InterPro" id="IPR005905">
    <property type="entry name" value="D_ala_D_ala"/>
</dbReference>
<dbReference type="InterPro" id="IPR011095">
    <property type="entry name" value="Dala_Dala_lig_C"/>
</dbReference>
<dbReference type="InterPro" id="IPR011127">
    <property type="entry name" value="Dala_Dala_lig_N"/>
</dbReference>
<dbReference type="InterPro" id="IPR016185">
    <property type="entry name" value="PreATP-grasp_dom_sf"/>
</dbReference>
<dbReference type="NCBIfam" id="TIGR01205">
    <property type="entry name" value="D_ala_D_alaTIGR"/>
    <property type="match status" value="1"/>
</dbReference>
<dbReference type="NCBIfam" id="NF002378">
    <property type="entry name" value="PRK01372.1"/>
    <property type="match status" value="1"/>
</dbReference>
<dbReference type="PANTHER" id="PTHR23132">
    <property type="entry name" value="D-ALANINE--D-ALANINE LIGASE"/>
    <property type="match status" value="1"/>
</dbReference>
<dbReference type="PANTHER" id="PTHR23132:SF23">
    <property type="entry name" value="D-ALANINE--D-ALANINE LIGASE B"/>
    <property type="match status" value="1"/>
</dbReference>
<dbReference type="Pfam" id="PF07478">
    <property type="entry name" value="Dala_Dala_lig_C"/>
    <property type="match status" value="1"/>
</dbReference>
<dbReference type="Pfam" id="PF01820">
    <property type="entry name" value="Dala_Dala_lig_N"/>
    <property type="match status" value="1"/>
</dbReference>
<dbReference type="PIRSF" id="PIRSF039102">
    <property type="entry name" value="Ddl/VanB"/>
    <property type="match status" value="1"/>
</dbReference>
<dbReference type="SUPFAM" id="SSF56059">
    <property type="entry name" value="Glutathione synthetase ATP-binding domain-like"/>
    <property type="match status" value="1"/>
</dbReference>
<dbReference type="SUPFAM" id="SSF52440">
    <property type="entry name" value="PreATP-grasp domain"/>
    <property type="match status" value="1"/>
</dbReference>
<dbReference type="PROSITE" id="PS50975">
    <property type="entry name" value="ATP_GRASP"/>
    <property type="match status" value="1"/>
</dbReference>
<dbReference type="PROSITE" id="PS00843">
    <property type="entry name" value="DALA_DALA_LIGASE_1"/>
    <property type="match status" value="1"/>
</dbReference>
<dbReference type="PROSITE" id="PS00844">
    <property type="entry name" value="DALA_DALA_LIGASE_2"/>
    <property type="match status" value="1"/>
</dbReference>
<proteinExistence type="inferred from homology"/>
<sequence length="308" mass="33346">MSNATKFGKVAVLLGGKSAERAVSLDSGQAVLDALLRSGVQAEAFDPQNRSVTELVNYDRAFIVLHGRGGEDGQIQGVLEWLNIPYTGTGVQGSAIGMDKVKTKQIWQGSDLPTAPYRIITKETDLDSVIAELGLPVIIKPVHEGSSVGMSKVEKAEDFAAAIEKATQHDAVVMAEKWITGREFTISFLNGQPLPVIRLQPPADVAFYDYEAKYQRNDVEYGIPCGLSETEEKKLQALCLRAFQAVGAEGWGRIDAMQDEQGNFWLLEVNTVPGMTSHSLVPKAAKAVGYSFDELCVAILDQTLEGTA</sequence>
<accession>B0V9F7</accession>
<name>DDL_ACIBY</name>